<dbReference type="EC" id="2.4.99.17" evidence="1"/>
<dbReference type="EMBL" id="CP000546">
    <property type="protein sequence ID" value="ABN00908.1"/>
    <property type="molecule type" value="Genomic_DNA"/>
</dbReference>
<dbReference type="RefSeq" id="WP_004194109.1">
    <property type="nucleotide sequence ID" value="NC_008836.1"/>
</dbReference>
<dbReference type="SMR" id="A2S5D2"/>
<dbReference type="KEGG" id="bml:BMA10229_A1166"/>
<dbReference type="HOGENOM" id="CLU_039110_1_0_4"/>
<dbReference type="UniPathway" id="UPA00392"/>
<dbReference type="Proteomes" id="UP000002283">
    <property type="component" value="Chromosome I"/>
</dbReference>
<dbReference type="GO" id="GO:0005737">
    <property type="term" value="C:cytoplasm"/>
    <property type="evidence" value="ECO:0007669"/>
    <property type="project" value="UniProtKB-SubCell"/>
</dbReference>
<dbReference type="GO" id="GO:0051075">
    <property type="term" value="F:S-adenosylmethionine:tRNA ribosyltransferase-isomerase activity"/>
    <property type="evidence" value="ECO:0007669"/>
    <property type="project" value="UniProtKB-EC"/>
</dbReference>
<dbReference type="GO" id="GO:0008616">
    <property type="term" value="P:queuosine biosynthetic process"/>
    <property type="evidence" value="ECO:0007669"/>
    <property type="project" value="UniProtKB-UniRule"/>
</dbReference>
<dbReference type="GO" id="GO:0002099">
    <property type="term" value="P:tRNA wobble guanine modification"/>
    <property type="evidence" value="ECO:0007669"/>
    <property type="project" value="TreeGrafter"/>
</dbReference>
<dbReference type="FunFam" id="3.40.1780.10:FF:000001">
    <property type="entry name" value="S-adenosylmethionine:tRNA ribosyltransferase-isomerase"/>
    <property type="match status" value="1"/>
</dbReference>
<dbReference type="Gene3D" id="2.40.10.240">
    <property type="entry name" value="QueA-like"/>
    <property type="match status" value="1"/>
</dbReference>
<dbReference type="Gene3D" id="3.40.1780.10">
    <property type="entry name" value="QueA-like"/>
    <property type="match status" value="1"/>
</dbReference>
<dbReference type="HAMAP" id="MF_00113">
    <property type="entry name" value="QueA"/>
    <property type="match status" value="1"/>
</dbReference>
<dbReference type="InterPro" id="IPR003699">
    <property type="entry name" value="QueA"/>
</dbReference>
<dbReference type="InterPro" id="IPR042118">
    <property type="entry name" value="QueA_dom1"/>
</dbReference>
<dbReference type="InterPro" id="IPR042119">
    <property type="entry name" value="QueA_dom2"/>
</dbReference>
<dbReference type="InterPro" id="IPR036100">
    <property type="entry name" value="QueA_sf"/>
</dbReference>
<dbReference type="NCBIfam" id="NF001140">
    <property type="entry name" value="PRK00147.1"/>
    <property type="match status" value="1"/>
</dbReference>
<dbReference type="NCBIfam" id="TIGR00113">
    <property type="entry name" value="queA"/>
    <property type="match status" value="1"/>
</dbReference>
<dbReference type="PANTHER" id="PTHR30307">
    <property type="entry name" value="S-ADENOSYLMETHIONINE:TRNA RIBOSYLTRANSFERASE-ISOMERASE"/>
    <property type="match status" value="1"/>
</dbReference>
<dbReference type="PANTHER" id="PTHR30307:SF0">
    <property type="entry name" value="S-ADENOSYLMETHIONINE:TRNA RIBOSYLTRANSFERASE-ISOMERASE"/>
    <property type="match status" value="1"/>
</dbReference>
<dbReference type="Pfam" id="PF02547">
    <property type="entry name" value="Queuosine_synth"/>
    <property type="match status" value="1"/>
</dbReference>
<dbReference type="SUPFAM" id="SSF111337">
    <property type="entry name" value="QueA-like"/>
    <property type="match status" value="1"/>
</dbReference>
<gene>
    <name evidence="1" type="primary">queA</name>
    <name type="ordered locus">BMA10229_A1166</name>
</gene>
<feature type="chain" id="PRO_1000015189" description="S-adenosylmethionine:tRNA ribosyltransferase-isomerase">
    <location>
        <begin position="1"/>
        <end position="360"/>
    </location>
</feature>
<evidence type="ECO:0000255" key="1">
    <source>
        <dbReference type="HAMAP-Rule" id="MF_00113"/>
    </source>
</evidence>
<protein>
    <recommendedName>
        <fullName evidence="1">S-adenosylmethionine:tRNA ribosyltransferase-isomerase</fullName>
        <ecNumber evidence="1">2.4.99.17</ecNumber>
    </recommendedName>
    <alternativeName>
        <fullName evidence="1">Queuosine biosynthesis protein QueA</fullName>
    </alternativeName>
</protein>
<sequence>MLTLSDFDFDLPPELIAQTALPERSASRLLEVDNTNPSAPPRLIDRRFAELPACVAPGDLLVFNDTKVLKARFFGRKASGGKIEVLIERVTGERTALAQIRASKSPPPGTTLTLADAFDVTVGERVEPFFTLHFPDNCLVLIERHGRLPLPPYIEHAPDAADETRYQTVFAANPGAVAAPTAGLHFDDAVLAALEARGVERATLTLHVGAGTFQPVRVENLAEHRMHSESYELTDALVEKIAATRARGGRVIAVGTTSMRALEAAARDAQAAGRPLAATRAETDIFITPGYRFRVVDRLVTNFHLPKSTLLMLVSAFAGIETIRAAYRHAIDARYRFFSYGDAMLLTRRDDAAEATHGGA</sequence>
<organism>
    <name type="scientific">Burkholderia mallei (strain NCTC 10229)</name>
    <dbReference type="NCBI Taxonomy" id="412022"/>
    <lineage>
        <taxon>Bacteria</taxon>
        <taxon>Pseudomonadati</taxon>
        <taxon>Pseudomonadota</taxon>
        <taxon>Betaproteobacteria</taxon>
        <taxon>Burkholderiales</taxon>
        <taxon>Burkholderiaceae</taxon>
        <taxon>Burkholderia</taxon>
        <taxon>pseudomallei group</taxon>
    </lineage>
</organism>
<accession>A2S5D2</accession>
<comment type="function">
    <text evidence="1">Transfers and isomerizes the ribose moiety from AdoMet to the 7-aminomethyl group of 7-deazaguanine (preQ1-tRNA) to give epoxyqueuosine (oQ-tRNA).</text>
</comment>
<comment type="catalytic activity">
    <reaction evidence="1">
        <text>7-aminomethyl-7-carbaguanosine(34) in tRNA + S-adenosyl-L-methionine = epoxyqueuosine(34) in tRNA + adenine + L-methionine + 2 H(+)</text>
        <dbReference type="Rhea" id="RHEA:32155"/>
        <dbReference type="Rhea" id="RHEA-COMP:10342"/>
        <dbReference type="Rhea" id="RHEA-COMP:18582"/>
        <dbReference type="ChEBI" id="CHEBI:15378"/>
        <dbReference type="ChEBI" id="CHEBI:16708"/>
        <dbReference type="ChEBI" id="CHEBI:57844"/>
        <dbReference type="ChEBI" id="CHEBI:59789"/>
        <dbReference type="ChEBI" id="CHEBI:82833"/>
        <dbReference type="ChEBI" id="CHEBI:194443"/>
        <dbReference type="EC" id="2.4.99.17"/>
    </reaction>
</comment>
<comment type="pathway">
    <text evidence="1">tRNA modification; tRNA-queuosine biosynthesis.</text>
</comment>
<comment type="subunit">
    <text evidence="1">Monomer.</text>
</comment>
<comment type="subcellular location">
    <subcellularLocation>
        <location evidence="1">Cytoplasm</location>
    </subcellularLocation>
</comment>
<comment type="similarity">
    <text evidence="1">Belongs to the QueA family.</text>
</comment>
<name>QUEA_BURM9</name>
<reference key="1">
    <citation type="journal article" date="2010" name="Genome Biol. Evol.">
        <title>Continuing evolution of Burkholderia mallei through genome reduction and large-scale rearrangements.</title>
        <authorList>
            <person name="Losada L."/>
            <person name="Ronning C.M."/>
            <person name="DeShazer D."/>
            <person name="Woods D."/>
            <person name="Fedorova N."/>
            <person name="Kim H.S."/>
            <person name="Shabalina S.A."/>
            <person name="Pearson T.R."/>
            <person name="Brinkac L."/>
            <person name="Tan P."/>
            <person name="Nandi T."/>
            <person name="Crabtree J."/>
            <person name="Badger J."/>
            <person name="Beckstrom-Sternberg S."/>
            <person name="Saqib M."/>
            <person name="Schutzer S.E."/>
            <person name="Keim P."/>
            <person name="Nierman W.C."/>
        </authorList>
    </citation>
    <scope>NUCLEOTIDE SEQUENCE [LARGE SCALE GENOMIC DNA]</scope>
    <source>
        <strain>NCTC 10229</strain>
    </source>
</reference>
<keyword id="KW-0963">Cytoplasm</keyword>
<keyword id="KW-0671">Queuosine biosynthesis</keyword>
<keyword id="KW-0949">S-adenosyl-L-methionine</keyword>
<keyword id="KW-0808">Transferase</keyword>
<proteinExistence type="inferred from homology"/>